<dbReference type="EMBL" id="AY241896">
    <property type="protein sequence ID" value="AAP73016.1"/>
    <property type="molecule type" value="Genomic_DNA"/>
</dbReference>
<dbReference type="SMR" id="Q6XBW1"/>
<dbReference type="GO" id="GO:0005743">
    <property type="term" value="C:mitochondrial inner membrane"/>
    <property type="evidence" value="ECO:0007669"/>
    <property type="project" value="UniProtKB-SubCell"/>
</dbReference>
<dbReference type="GO" id="GO:0045275">
    <property type="term" value="C:respiratory chain complex III"/>
    <property type="evidence" value="ECO:0007669"/>
    <property type="project" value="InterPro"/>
</dbReference>
<dbReference type="GO" id="GO:0046872">
    <property type="term" value="F:metal ion binding"/>
    <property type="evidence" value="ECO:0007669"/>
    <property type="project" value="UniProtKB-KW"/>
</dbReference>
<dbReference type="GO" id="GO:0008121">
    <property type="term" value="F:ubiquinol-cytochrome-c reductase activity"/>
    <property type="evidence" value="ECO:0007669"/>
    <property type="project" value="InterPro"/>
</dbReference>
<dbReference type="GO" id="GO:0006122">
    <property type="term" value="P:mitochondrial electron transport, ubiquinol to cytochrome c"/>
    <property type="evidence" value="ECO:0007669"/>
    <property type="project" value="TreeGrafter"/>
</dbReference>
<dbReference type="CDD" id="cd00290">
    <property type="entry name" value="cytochrome_b_C"/>
    <property type="match status" value="1"/>
</dbReference>
<dbReference type="CDD" id="cd00284">
    <property type="entry name" value="Cytochrome_b_N"/>
    <property type="match status" value="1"/>
</dbReference>
<dbReference type="FunFam" id="1.20.810.10:FF:000002">
    <property type="entry name" value="Cytochrome b"/>
    <property type="match status" value="1"/>
</dbReference>
<dbReference type="Gene3D" id="1.20.810.10">
    <property type="entry name" value="Cytochrome Bc1 Complex, Chain C"/>
    <property type="match status" value="1"/>
</dbReference>
<dbReference type="InterPro" id="IPR005798">
    <property type="entry name" value="Cyt_b/b6_C"/>
</dbReference>
<dbReference type="InterPro" id="IPR036150">
    <property type="entry name" value="Cyt_b/b6_C_sf"/>
</dbReference>
<dbReference type="InterPro" id="IPR005797">
    <property type="entry name" value="Cyt_b/b6_N"/>
</dbReference>
<dbReference type="InterPro" id="IPR027387">
    <property type="entry name" value="Cytb/b6-like_sf"/>
</dbReference>
<dbReference type="InterPro" id="IPR030689">
    <property type="entry name" value="Cytochrome_b"/>
</dbReference>
<dbReference type="InterPro" id="IPR048260">
    <property type="entry name" value="Cytochrome_b_C_euk/bac"/>
</dbReference>
<dbReference type="InterPro" id="IPR048259">
    <property type="entry name" value="Cytochrome_b_N_euk/bac"/>
</dbReference>
<dbReference type="InterPro" id="IPR016174">
    <property type="entry name" value="Di-haem_cyt_TM"/>
</dbReference>
<dbReference type="PANTHER" id="PTHR19271">
    <property type="entry name" value="CYTOCHROME B"/>
    <property type="match status" value="1"/>
</dbReference>
<dbReference type="PANTHER" id="PTHR19271:SF16">
    <property type="entry name" value="CYTOCHROME B"/>
    <property type="match status" value="1"/>
</dbReference>
<dbReference type="Pfam" id="PF00032">
    <property type="entry name" value="Cytochrom_B_C"/>
    <property type="match status" value="1"/>
</dbReference>
<dbReference type="Pfam" id="PF00033">
    <property type="entry name" value="Cytochrome_B"/>
    <property type="match status" value="1"/>
</dbReference>
<dbReference type="PIRSF" id="PIRSF038885">
    <property type="entry name" value="COB"/>
    <property type="match status" value="1"/>
</dbReference>
<dbReference type="SUPFAM" id="SSF81648">
    <property type="entry name" value="a domain/subunit of cytochrome bc1 complex (Ubiquinol-cytochrome c reductase)"/>
    <property type="match status" value="1"/>
</dbReference>
<dbReference type="SUPFAM" id="SSF81342">
    <property type="entry name" value="Transmembrane di-heme cytochromes"/>
    <property type="match status" value="1"/>
</dbReference>
<dbReference type="PROSITE" id="PS51003">
    <property type="entry name" value="CYTB_CTER"/>
    <property type="match status" value="1"/>
</dbReference>
<dbReference type="PROSITE" id="PS51002">
    <property type="entry name" value="CYTB_NTER"/>
    <property type="match status" value="1"/>
</dbReference>
<geneLocation type="mitochondrion"/>
<name>CYB_GENPA</name>
<organism>
    <name type="scientific">Genetta pardina</name>
    <name type="common">Pardine genet</name>
    <name type="synonym">West African large-spotted genet</name>
    <dbReference type="NCBI Taxonomy" id="235204"/>
    <lineage>
        <taxon>Eukaryota</taxon>
        <taxon>Metazoa</taxon>
        <taxon>Chordata</taxon>
        <taxon>Craniata</taxon>
        <taxon>Vertebrata</taxon>
        <taxon>Euteleostomi</taxon>
        <taxon>Mammalia</taxon>
        <taxon>Eutheria</taxon>
        <taxon>Laurasiatheria</taxon>
        <taxon>Carnivora</taxon>
        <taxon>Feliformia</taxon>
        <taxon>Viverridae</taxon>
        <taxon>Viverrinae</taxon>
        <taxon>Genetta</taxon>
    </lineage>
</organism>
<proteinExistence type="inferred from homology"/>
<protein>
    <recommendedName>
        <fullName>Cytochrome b</fullName>
    </recommendedName>
    <alternativeName>
        <fullName>Complex III subunit 3</fullName>
    </alternativeName>
    <alternativeName>
        <fullName>Complex III subunit III</fullName>
    </alternativeName>
    <alternativeName>
        <fullName>Cytochrome b-c1 complex subunit 3</fullName>
    </alternativeName>
    <alternativeName>
        <fullName>Ubiquinol-cytochrome-c reductase complex cytochrome b subunit</fullName>
    </alternativeName>
</protein>
<sequence length="379" mass="42642">MTNIRKSHPLAKIINESFIDLPAPSNISAWWNFGSLLGVCLIIQILTGLFLAMHYTSDTMTAFSSVTHICRDVNYGWIIRYIHANGASMFFICLFMHVGRGVYYGSFTFTETWNIGILLMFTVMATAFMGYVLPWGQMSFWGATVITNLLSAIPYIGTNLVEWIWGGFSVDKATLTRFFAFHFILPFIISALAAVHLLFLHETGSNNPSGVVSDSDKIPFHPYYTIKDILGLLLLILVLMLLVLFSPDLLGDPDNYIPANPLNTPPHIKPEWYFLFAYAILRSIPNKLGGVLALILSILILAIVPLLHTSKQRSMMFRPLSQCLFWLLVADLLTLTWIGGQPVEHPFITIGQLASILYFSIFLILMPVSGIIENRLLKW</sequence>
<feature type="chain" id="PRO_0000247814" description="Cytochrome b">
    <location>
        <begin position="1"/>
        <end position="379"/>
    </location>
</feature>
<feature type="transmembrane region" description="Helical" evidence="2">
    <location>
        <begin position="33"/>
        <end position="53"/>
    </location>
</feature>
<feature type="transmembrane region" description="Helical" evidence="2">
    <location>
        <begin position="77"/>
        <end position="98"/>
    </location>
</feature>
<feature type="transmembrane region" description="Helical" evidence="2">
    <location>
        <begin position="113"/>
        <end position="133"/>
    </location>
</feature>
<feature type="transmembrane region" description="Helical" evidence="2">
    <location>
        <begin position="178"/>
        <end position="198"/>
    </location>
</feature>
<feature type="transmembrane region" description="Helical" evidence="2">
    <location>
        <begin position="226"/>
        <end position="246"/>
    </location>
</feature>
<feature type="transmembrane region" description="Helical" evidence="2">
    <location>
        <begin position="288"/>
        <end position="308"/>
    </location>
</feature>
<feature type="transmembrane region" description="Helical" evidence="2">
    <location>
        <begin position="320"/>
        <end position="340"/>
    </location>
</feature>
<feature type="transmembrane region" description="Helical" evidence="2">
    <location>
        <begin position="347"/>
        <end position="367"/>
    </location>
</feature>
<feature type="binding site" description="axial binding residue" evidence="2">
    <location>
        <position position="83"/>
    </location>
    <ligand>
        <name>heme b</name>
        <dbReference type="ChEBI" id="CHEBI:60344"/>
        <label>b562</label>
    </ligand>
    <ligandPart>
        <name>Fe</name>
        <dbReference type="ChEBI" id="CHEBI:18248"/>
    </ligandPart>
</feature>
<feature type="binding site" description="axial binding residue" evidence="2">
    <location>
        <position position="97"/>
    </location>
    <ligand>
        <name>heme b</name>
        <dbReference type="ChEBI" id="CHEBI:60344"/>
        <label>b566</label>
    </ligand>
    <ligandPart>
        <name>Fe</name>
        <dbReference type="ChEBI" id="CHEBI:18248"/>
    </ligandPart>
</feature>
<feature type="binding site" description="axial binding residue" evidence="2">
    <location>
        <position position="182"/>
    </location>
    <ligand>
        <name>heme b</name>
        <dbReference type="ChEBI" id="CHEBI:60344"/>
        <label>b562</label>
    </ligand>
    <ligandPart>
        <name>Fe</name>
        <dbReference type="ChEBI" id="CHEBI:18248"/>
    </ligandPart>
</feature>
<feature type="binding site" description="axial binding residue" evidence="2">
    <location>
        <position position="196"/>
    </location>
    <ligand>
        <name>heme b</name>
        <dbReference type="ChEBI" id="CHEBI:60344"/>
        <label>b566</label>
    </ligand>
    <ligandPart>
        <name>Fe</name>
        <dbReference type="ChEBI" id="CHEBI:18248"/>
    </ligandPart>
</feature>
<feature type="binding site" evidence="2">
    <location>
        <position position="201"/>
    </location>
    <ligand>
        <name>a ubiquinone</name>
        <dbReference type="ChEBI" id="CHEBI:16389"/>
    </ligand>
</feature>
<keyword id="KW-0249">Electron transport</keyword>
<keyword id="KW-0349">Heme</keyword>
<keyword id="KW-0408">Iron</keyword>
<keyword id="KW-0472">Membrane</keyword>
<keyword id="KW-0479">Metal-binding</keyword>
<keyword id="KW-0496">Mitochondrion</keyword>
<keyword id="KW-0999">Mitochondrion inner membrane</keyword>
<keyword id="KW-0679">Respiratory chain</keyword>
<keyword id="KW-0812">Transmembrane</keyword>
<keyword id="KW-1133">Transmembrane helix</keyword>
<keyword id="KW-0813">Transport</keyword>
<keyword id="KW-0830">Ubiquinone</keyword>
<gene>
    <name type="primary">MT-CYB</name>
    <name type="synonym">COB</name>
    <name type="synonym">CYTB</name>
    <name type="synonym">MTCYB</name>
</gene>
<evidence type="ECO:0000250" key="1"/>
<evidence type="ECO:0000250" key="2">
    <source>
        <dbReference type="UniProtKB" id="P00157"/>
    </source>
</evidence>
<evidence type="ECO:0000255" key="3">
    <source>
        <dbReference type="PROSITE-ProRule" id="PRU00967"/>
    </source>
</evidence>
<evidence type="ECO:0000255" key="4">
    <source>
        <dbReference type="PROSITE-ProRule" id="PRU00968"/>
    </source>
</evidence>
<comment type="function">
    <text evidence="2">Component of the ubiquinol-cytochrome c reductase complex (complex III or cytochrome b-c1 complex) that is part of the mitochondrial respiratory chain. The b-c1 complex mediates electron transfer from ubiquinol to cytochrome c. Contributes to the generation of a proton gradient across the mitochondrial membrane that is then used for ATP synthesis.</text>
</comment>
<comment type="cofactor">
    <cofactor evidence="2">
        <name>heme b</name>
        <dbReference type="ChEBI" id="CHEBI:60344"/>
    </cofactor>
    <text evidence="2">Binds 2 heme b groups non-covalently.</text>
</comment>
<comment type="subunit">
    <text evidence="2">The cytochrome bc1 complex contains 11 subunits: 3 respiratory subunits (MT-CYB, CYC1 and UQCRFS1), 2 core proteins (UQCRC1 and UQCRC2) and 6 low-molecular weight proteins (UQCRH/QCR6, UQCRB/QCR7, UQCRQ/QCR8, UQCR10/QCR9, UQCR11/QCR10 and a cleavage product of UQCRFS1). This cytochrome bc1 complex then forms a dimer.</text>
</comment>
<comment type="subcellular location">
    <subcellularLocation>
        <location evidence="2">Mitochondrion inner membrane</location>
        <topology evidence="2">Multi-pass membrane protein</topology>
    </subcellularLocation>
</comment>
<comment type="miscellaneous">
    <text evidence="1">Heme 1 (or BL or b562) is low-potential and absorbs at about 562 nm, and heme 2 (or BH or b566) is high-potential and absorbs at about 566 nm.</text>
</comment>
<comment type="similarity">
    <text evidence="3 4">Belongs to the cytochrome b family.</text>
</comment>
<comment type="caution">
    <text evidence="2">The full-length protein contains only eight transmembrane helices, not nine as predicted by bioinformatics tools.</text>
</comment>
<accession>Q6XBW1</accession>
<reference key="1">
    <citation type="journal article" date="2004" name="Biol. J. Linn. Soc. Lond.">
        <title>Genets (Carnivora, Viverridae) in Africa: an evolutionary synthesis based on cytochrome b sequences and morphological characters.</title>
        <authorList>
            <person name="Gaubert P."/>
            <person name="Fernandes C.A."/>
            <person name="Bruford M.W."/>
            <person name="Veron G."/>
        </authorList>
    </citation>
    <scope>NUCLEOTIDE SEQUENCE [GENOMIC DNA]</scope>
</reference>